<evidence type="ECO:0000250" key="1"/>
<evidence type="ECO:0000269" key="2">
    <source>
    </source>
</evidence>
<evidence type="ECO:0000269" key="3">
    <source>
    </source>
</evidence>
<evidence type="ECO:0000269" key="4">
    <source>
    </source>
</evidence>
<evidence type="ECO:0000269" key="5">
    <source>
    </source>
</evidence>
<evidence type="ECO:0000269" key="6">
    <source ref="4"/>
</evidence>
<evidence type="ECO:0000305" key="7"/>
<evidence type="ECO:0000305" key="8">
    <source>
    </source>
</evidence>
<evidence type="ECO:0007829" key="9">
    <source>
        <dbReference type="PDB" id="1VZ7"/>
    </source>
</evidence>
<evidence type="ECO:0007829" key="10">
    <source>
        <dbReference type="PDB" id="2V4I"/>
    </source>
</evidence>
<evidence type="ECO:0007829" key="11">
    <source>
        <dbReference type="PDB" id="2VZK"/>
    </source>
</evidence>
<dbReference type="EC" id="2.3.1.35"/>
<dbReference type="EMBL" id="X84101">
    <property type="protein sequence ID" value="CAA58906.1"/>
    <property type="molecule type" value="Genomic_DNA"/>
</dbReference>
<dbReference type="PIR" id="S57671">
    <property type="entry name" value="S57671"/>
</dbReference>
<dbReference type="RefSeq" id="WP_003952513.1">
    <property type="nucleotide sequence ID" value="NZ_CM000913.1"/>
</dbReference>
<dbReference type="PDB" id="1VZ6">
    <property type="method" value="X-ray"/>
    <property type="resolution" value="2.75 A"/>
    <property type="chains" value="A/B=1-393"/>
</dbReference>
<dbReference type="PDB" id="1VZ7">
    <property type="method" value="X-ray"/>
    <property type="resolution" value="3.00 A"/>
    <property type="chains" value="A/B/C/D=1-393"/>
</dbReference>
<dbReference type="PDB" id="1VZ8">
    <property type="method" value="X-ray"/>
    <property type="resolution" value="2.75 A"/>
    <property type="chains" value="A/B/C/D=1-393"/>
</dbReference>
<dbReference type="PDB" id="2V4I">
    <property type="method" value="X-ray"/>
    <property type="resolution" value="2.20 A"/>
    <property type="chains" value="A/C/E/G=8-180, B/D/F/H=182-393"/>
</dbReference>
<dbReference type="PDB" id="2VZK">
    <property type="method" value="X-ray"/>
    <property type="resolution" value="2.33 A"/>
    <property type="chains" value="A/C/E/G=8-180, B=181-393, D/F/H=182-393"/>
</dbReference>
<dbReference type="PDB" id="2YEP">
    <property type="method" value="X-ray"/>
    <property type="resolution" value="2.70 A"/>
    <property type="chains" value="A/C/E/G=1-180, B/D/H=182-393, F=181-393"/>
</dbReference>
<dbReference type="PDBsum" id="1VZ6"/>
<dbReference type="PDBsum" id="1VZ7"/>
<dbReference type="PDBsum" id="1VZ8"/>
<dbReference type="PDBsum" id="2V4I"/>
<dbReference type="PDBsum" id="2VZK"/>
<dbReference type="PDBsum" id="2YEP"/>
<dbReference type="SMR" id="P0DJQ5"/>
<dbReference type="GeneID" id="93729328"/>
<dbReference type="OrthoDB" id="9804242at2"/>
<dbReference type="BRENDA" id="2.3.1.35">
    <property type="organism ID" value="5988"/>
</dbReference>
<dbReference type="UniPathway" id="UPA00112"/>
<dbReference type="EvolutionaryTrace" id="P0DJQ5"/>
<dbReference type="GO" id="GO:0005737">
    <property type="term" value="C:cytoplasm"/>
    <property type="evidence" value="ECO:0007669"/>
    <property type="project" value="UniProtKB-SubCell"/>
</dbReference>
<dbReference type="GO" id="GO:0004358">
    <property type="term" value="F:glutamate N-acetyltransferase activity"/>
    <property type="evidence" value="ECO:0007669"/>
    <property type="project" value="UniProtKB-UniRule"/>
</dbReference>
<dbReference type="GO" id="GO:0004042">
    <property type="term" value="F:L-glutamate N-acetyltransferase activity"/>
    <property type="evidence" value="ECO:0007669"/>
    <property type="project" value="UniProtKB-UniRule"/>
</dbReference>
<dbReference type="GO" id="GO:0033050">
    <property type="term" value="P:clavulanic acid biosynthetic process"/>
    <property type="evidence" value="ECO:0007669"/>
    <property type="project" value="UniProtKB-UniPathway"/>
</dbReference>
<dbReference type="GO" id="GO:0006526">
    <property type="term" value="P:L-arginine biosynthetic process"/>
    <property type="evidence" value="ECO:0007669"/>
    <property type="project" value="UniProtKB-UniRule"/>
</dbReference>
<dbReference type="GO" id="GO:0006592">
    <property type="term" value="P:ornithine biosynthetic process"/>
    <property type="evidence" value="ECO:0007669"/>
    <property type="project" value="TreeGrafter"/>
</dbReference>
<dbReference type="CDD" id="cd02152">
    <property type="entry name" value="OAT"/>
    <property type="match status" value="1"/>
</dbReference>
<dbReference type="FunFam" id="3.10.20.340:FF:000003">
    <property type="entry name" value="Arginine biosynthesis bifunctional protein ArgJ"/>
    <property type="match status" value="1"/>
</dbReference>
<dbReference type="Gene3D" id="3.10.20.340">
    <property type="entry name" value="ArgJ beta chain, C-terminal domain"/>
    <property type="match status" value="1"/>
</dbReference>
<dbReference type="Gene3D" id="3.60.70.12">
    <property type="entry name" value="L-amino peptidase D-ALA esterase/amidase"/>
    <property type="match status" value="1"/>
</dbReference>
<dbReference type="HAMAP" id="MF_01106">
    <property type="entry name" value="ArgJ"/>
    <property type="match status" value="1"/>
</dbReference>
<dbReference type="InterPro" id="IPR002813">
    <property type="entry name" value="Arg_biosynth_ArgJ"/>
</dbReference>
<dbReference type="InterPro" id="IPR016117">
    <property type="entry name" value="ArgJ-like_dom_sf"/>
</dbReference>
<dbReference type="InterPro" id="IPR042195">
    <property type="entry name" value="ArgJ_beta_C"/>
</dbReference>
<dbReference type="NCBIfam" id="TIGR00120">
    <property type="entry name" value="ArgJ"/>
    <property type="match status" value="1"/>
</dbReference>
<dbReference type="NCBIfam" id="NF003802">
    <property type="entry name" value="PRK05388.1"/>
    <property type="match status" value="1"/>
</dbReference>
<dbReference type="PANTHER" id="PTHR23100">
    <property type="entry name" value="ARGININE BIOSYNTHESIS BIFUNCTIONAL PROTEIN ARGJ"/>
    <property type="match status" value="1"/>
</dbReference>
<dbReference type="PANTHER" id="PTHR23100:SF0">
    <property type="entry name" value="ARGININE BIOSYNTHESIS BIFUNCTIONAL PROTEIN ARGJ, MITOCHONDRIAL"/>
    <property type="match status" value="1"/>
</dbReference>
<dbReference type="Pfam" id="PF01960">
    <property type="entry name" value="ArgJ"/>
    <property type="match status" value="1"/>
</dbReference>
<dbReference type="SUPFAM" id="SSF56266">
    <property type="entry name" value="DmpA/ArgJ-like"/>
    <property type="match status" value="1"/>
</dbReference>
<gene>
    <name type="primary">oat2</name>
    <name type="synonym">dclD</name>
</gene>
<protein>
    <recommendedName>
        <fullName>Glutamate N-acetyltransferase Oat2</fullName>
        <ecNumber>2.3.1.35</ecNumber>
    </recommendedName>
    <alternativeName>
        <fullName>Ornithine acetyltransferase</fullName>
    </alternativeName>
    <alternativeName>
        <fullName>Ornithine transacetylase</fullName>
        <shortName>OATase</shortName>
    </alternativeName>
    <component>
        <recommendedName>
            <fullName>Glutamate N-acetyltransferase alpha chain</fullName>
        </recommendedName>
    </component>
    <component>
        <recommendedName>
            <fullName>Glutamate N-acetyltransferase beta chain</fullName>
        </recommendedName>
    </component>
</protein>
<keyword id="KW-0002">3D-structure</keyword>
<keyword id="KW-0012">Acyltransferase</keyword>
<keyword id="KW-0068">Autocatalytic cleavage</keyword>
<keyword id="KW-0963">Cytoplasm</keyword>
<keyword id="KW-0903">Direct protein sequencing</keyword>
<keyword id="KW-0808">Transferase</keyword>
<proteinExistence type="evidence at protein level"/>
<accession>P0DJQ5</accession>
<accession>Q53940</accession>
<feature type="chain" id="PRO_0000002267" description="Glutamate N-acetyltransferase alpha chain">
    <location>
        <begin position="1"/>
        <end position="180"/>
    </location>
</feature>
<feature type="chain" id="PRO_0000002268" description="Glutamate N-acetyltransferase beta chain">
    <location>
        <begin position="181"/>
        <end position="393"/>
    </location>
</feature>
<feature type="active site" description="Nucleophile">
    <location>
        <position position="181"/>
    </location>
</feature>
<feature type="binding site">
    <location>
        <begin position="148"/>
        <end position="149"/>
    </location>
    <ligand>
        <name>substrate</name>
    </ligand>
</feature>
<feature type="binding site">
    <location>
        <begin position="170"/>
        <end position="173"/>
    </location>
    <ligand>
        <name>substrate</name>
    </ligand>
</feature>
<feature type="binding site" evidence="5">
    <location>
        <position position="181"/>
    </location>
    <ligand>
        <name>substrate</name>
    </ligand>
</feature>
<feature type="binding site" evidence="5">
    <location>
        <position position="260"/>
    </location>
    <ligand>
        <name>substrate</name>
    </ligand>
</feature>
<feature type="binding site" evidence="5">
    <location>
        <position position="388"/>
    </location>
    <ligand>
        <name>substrate</name>
    </ligand>
</feature>
<feature type="binding site" evidence="5">
    <location>
        <position position="393"/>
    </location>
    <ligand>
        <name>substrate</name>
    </ligand>
</feature>
<feature type="site" description="Involved in the stabilization of negative charge on the oxyanion by the formation of the oxyanion hole" evidence="1">
    <location>
        <position position="111"/>
    </location>
</feature>
<feature type="site" description="Involved in the stabilization of negative charge on the oxyanion by the formation of the oxyanion hole">
    <location>
        <position position="112"/>
    </location>
</feature>
<feature type="site" description="Cleavage; by autolysis">
    <location>
        <begin position="180"/>
        <end position="181"/>
    </location>
</feature>
<feature type="mutagenesis site" description="No autoproteolysis." evidence="5">
    <original>T</original>
    <variation>A</variation>
    <location>
        <position position="148"/>
    </location>
</feature>
<feature type="mutagenesis site" description="Results in a 20:80 mixture of unprocessed:processed proteins." evidence="5">
    <original>T</original>
    <variation>A</variation>
    <location>
        <position position="149"/>
    </location>
</feature>
<feature type="mutagenesis site" description="Results in a 50:50 mixture of unprocessed:processed proteins." evidence="5">
    <original>D</original>
    <variation>G</variation>
    <location>
        <position position="150"/>
    </location>
</feature>
<feature type="mutagenesis site" description="No autoproteolysis." evidence="5">
    <original>K</original>
    <variation>A</variation>
    <location>
        <position position="170"/>
    </location>
</feature>
<feature type="mutagenesis site" description="No autoproteolysis; loss of activity." evidence="3">
    <original>T</original>
    <variation>A</variation>
    <location>
        <position position="181"/>
    </location>
</feature>
<feature type="strand" evidence="10">
    <location>
        <begin position="12"/>
        <end position="17"/>
    </location>
</feature>
<feature type="strand" evidence="11">
    <location>
        <begin position="21"/>
        <end position="24"/>
    </location>
</feature>
<feature type="strand" evidence="10">
    <location>
        <begin position="29"/>
        <end position="36"/>
    </location>
</feature>
<feature type="strand" evidence="10">
    <location>
        <begin position="39"/>
        <end position="44"/>
    </location>
</feature>
<feature type="helix" evidence="10">
    <location>
        <begin position="52"/>
        <end position="60"/>
    </location>
</feature>
<feature type="strand" evidence="10">
    <location>
        <begin position="62"/>
        <end position="65"/>
    </location>
</feature>
<feature type="strand" evidence="10">
    <location>
        <begin position="68"/>
        <end position="74"/>
    </location>
</feature>
<feature type="helix" evidence="10">
    <location>
        <begin position="81"/>
        <end position="98"/>
    </location>
</feature>
<feature type="helix" evidence="10">
    <location>
        <begin position="103"/>
        <end position="105"/>
    </location>
</feature>
<feature type="strand" evidence="10">
    <location>
        <begin position="106"/>
        <end position="112"/>
    </location>
</feature>
<feature type="helix" evidence="10">
    <location>
        <begin position="120"/>
        <end position="127"/>
    </location>
</feature>
<feature type="strand" evidence="11">
    <location>
        <begin position="134"/>
        <end position="137"/>
    </location>
</feature>
<feature type="helix" evidence="10">
    <location>
        <begin position="139"/>
        <end position="146"/>
    </location>
</feature>
<feature type="strand" evidence="10">
    <location>
        <begin position="154"/>
        <end position="160"/>
    </location>
</feature>
<feature type="strand" evidence="10">
    <location>
        <begin position="163"/>
        <end position="170"/>
    </location>
</feature>
<feature type="strand" evidence="10">
    <location>
        <begin position="172"/>
        <end position="174"/>
    </location>
</feature>
<feature type="strand" evidence="10">
    <location>
        <begin position="183"/>
        <end position="188"/>
    </location>
</feature>
<feature type="helix" evidence="10">
    <location>
        <begin position="194"/>
        <end position="207"/>
    </location>
</feature>
<feature type="helix" evidence="10">
    <location>
        <begin position="209"/>
        <end position="211"/>
    </location>
</feature>
<feature type="strand" evidence="10">
    <location>
        <begin position="214"/>
        <end position="216"/>
    </location>
</feature>
<feature type="strand" evidence="10">
    <location>
        <begin position="223"/>
        <end position="228"/>
    </location>
</feature>
<feature type="helix" evidence="10">
    <location>
        <begin position="237"/>
        <end position="257"/>
    </location>
</feature>
<feature type="strand" evidence="10">
    <location>
        <begin position="265"/>
        <end position="275"/>
    </location>
</feature>
<feature type="helix" evidence="10">
    <location>
        <begin position="276"/>
        <end position="287"/>
    </location>
</feature>
<feature type="helix" evidence="10">
    <location>
        <begin position="290"/>
        <end position="297"/>
    </location>
</feature>
<feature type="helix" evidence="10">
    <location>
        <begin position="303"/>
        <end position="311"/>
    </location>
</feature>
<feature type="turn" evidence="9">
    <location>
        <begin position="312"/>
        <end position="315"/>
    </location>
</feature>
<feature type="turn" evidence="10">
    <location>
        <begin position="321"/>
        <end position="323"/>
    </location>
</feature>
<feature type="strand" evidence="10">
    <location>
        <begin position="325"/>
        <end position="328"/>
    </location>
</feature>
<feature type="strand" evidence="10">
    <location>
        <begin position="331"/>
        <end position="334"/>
    </location>
</feature>
<feature type="strand" evidence="11">
    <location>
        <begin position="338"/>
        <end position="341"/>
    </location>
</feature>
<feature type="turn" evidence="11">
    <location>
        <begin position="342"/>
        <end position="344"/>
    </location>
</feature>
<feature type="helix" evidence="10">
    <location>
        <begin position="345"/>
        <end position="356"/>
    </location>
</feature>
<feature type="strand" evidence="10">
    <location>
        <begin position="357"/>
        <end position="365"/>
    </location>
</feature>
<feature type="strand" evidence="10">
    <location>
        <begin position="368"/>
        <end position="378"/>
    </location>
</feature>
<feature type="helix" evidence="10">
    <location>
        <begin position="382"/>
        <end position="389"/>
    </location>
</feature>
<reference key="1">
    <citation type="journal article" date="1995" name="Gene">
        <title>Clavulanic acid biosynthesis in Streptomyces clavuligerus: gene cloning and characterization.</title>
        <authorList>
            <person name="Hodgson J.E."/>
            <person name="Fosberry A.P."/>
            <person name="Rawlinson N.S."/>
            <person name="Ross H.N.M."/>
            <person name="Neal R.J."/>
            <person name="Arnell J.C."/>
            <person name="Earl A.J."/>
            <person name="Lawlor E.J."/>
        </authorList>
    </citation>
    <scope>NUCLEOTIDE SEQUENCE [GENOMIC DNA]</scope>
    <scope>NOMENCLATURE</scope>
</reference>
<reference key="2">
    <citation type="journal article" date="2002" name="Eur. J. Biochem.">
        <title>ORF6 from the clavulanic acid gene cluster of Streptomyces clavuligerus has ornithine acetyltransferase activity.</title>
        <authorList>
            <person name="Kershaw N.J."/>
            <person name="McNaughton H.J."/>
            <person name="Hewitson K.S."/>
            <person name="Hernandez H."/>
            <person name="Griffin J."/>
            <person name="Hughes C."/>
            <person name="Greaves P."/>
            <person name="Barton B."/>
            <person name="Robinson C.V."/>
            <person name="Schofield C.J."/>
        </authorList>
    </citation>
    <scope>PROTEIN SEQUENCE OF 1-10 AND 181-190</scope>
    <scope>FUNCTION AS AN OATASE</scope>
    <scope>CATALYTIC ACTIVITY</scope>
    <scope>MASS SPECTROMETRY</scope>
    <scope>AUTOCATALYTIC CLEAVAGE</scope>
    <scope>BIOPHYSICOCHEMICAL PROPERTIES</scope>
    <scope>SUBSTRATE SPECIFICITY</scope>
    <scope>SUBUNIT</scope>
</reference>
<reference key="3">
    <citation type="journal article" date="2005" name="Biochem. J.">
        <title>X-ray crystal structure of ornithine acetyltransferase from the clavulanic acid biosynthesis gene cluster.</title>
        <authorList>
            <person name="Elkins J.M."/>
            <person name="Kershaw N.J."/>
            <person name="Schofield C.J."/>
        </authorList>
    </citation>
    <scope>X-RAY CRYSTALLOGRAPHY (2.75 ANGSTROMS)</scope>
    <scope>MUTAGENESIS OF THR-181</scope>
    <scope>SUBUNIT</scope>
</reference>
<reference key="4">
    <citation type="submission" date="2008-09" db="PDB data bank">
        <title>Structure of a novel n-acyl-enzyme intermediate of an n- terminal nucleophile (ntn) hydrolase, oat2.</title>
        <authorList>
            <person name="Iqbal A."/>
            <person name="Clifton I.J."/>
            <person name="Schofield C.J."/>
        </authorList>
    </citation>
    <scope>X-RAY CRYSTALLOGRAPHY (2.20 ANGSTROMS)</scope>
    <scope>SUBUNIT</scope>
</reference>
<reference key="5">
    <citation type="journal article" date="2009" name="J. Am. Chem. Soc.">
        <title>Anatomy of a simple acyl intermediate in enzyme catalysis: combined biophysical and modeling studies on ornithine acetyl transferase.</title>
        <authorList>
            <person name="Iqbal A."/>
            <person name="Clifton I.J."/>
            <person name="Bagonis M."/>
            <person name="Kershaw N.J."/>
            <person name="Domene C."/>
            <person name="Claridge T.D."/>
            <person name="Wharton C.W."/>
            <person name="Schofield C.J."/>
        </authorList>
    </citation>
    <scope>X-RAY CRYSTALLOGRAPHY (2.33 ANGSTROMS) OF 8-393 OF ACYL INTERMEDIATE</scope>
    <scope>SUBUNIT</scope>
</reference>
<reference key="6">
    <citation type="journal article" date="2011" name="Org. Biomol. Chem.">
        <title>Structural and biochemical analyses reveal how ornithine acetyl transferase binds acidic and basic amino acid substrates.</title>
        <authorList>
            <person name="Iqbal A."/>
            <person name="Clifton I.J."/>
            <person name="Chowdhury R."/>
            <person name="Ivison D."/>
            <person name="Domene C."/>
            <person name="Schofield C.J."/>
        </authorList>
    </citation>
    <scope>X-RAY CRYSTALLOGRAPHY (2.7 ANGSTROMS) OF ACYL INTERMEDIATE AND IN COMPLEX WITH SUBSTRATE</scope>
    <scope>MUTAGENESIS OF THR-148; THR-149; ASP-150 AND LYS-170</scope>
    <scope>SUBUNIT</scope>
</reference>
<sequence length="393" mass="41608">MSDSTPKTPRGFVVHTAPVGLADDGRDDFTVLASTAPATVSAVFTRSRFAGPSVVLCREAVADGQARGVVVLARNANVATGLEGEENAREVREAVARALGLPEGEMLIASTGVIGRQYPMESIREHLKTLEWPAGEGGFDRAARAIMTTDTRPKEVRVSVGGATLVGIAKGVGMLEPDMATLLTFFATDARLDPAEQDRLFRRVMDRTFNAVSIDTDTSTSDTAVLFANGLAGEVDAGEFEEALHTAALALVKDIASDGEGAAKLIEVQVTGARDDAQAKRVGKTVVNSPLVKTAVHGCDPNWGRVAMAIGKCSDDTDIDQERVTIRFGEVEVYPPKARGDQADDALRAAVAEHLRGDEVVIGIDLAIADGAFTVYGCDLTEGYVRLNSEYTT</sequence>
<name>GNAT2_STRCL</name>
<organism>
    <name type="scientific">Streptomyces clavuligerus</name>
    <dbReference type="NCBI Taxonomy" id="1901"/>
    <lineage>
        <taxon>Bacteria</taxon>
        <taxon>Bacillati</taxon>
        <taxon>Actinomycetota</taxon>
        <taxon>Actinomycetes</taxon>
        <taxon>Kitasatosporales</taxon>
        <taxon>Streptomycetaceae</taxon>
        <taxon>Streptomyces</taxon>
    </lineage>
</organism>
<comment type="function">
    <text evidence="2">Catalyzes the biosynthesis of ornithine by transacetylation between N(2)-acetylornithine and glutamate. It can also use L-arginine, L-glutamine and L-lysine as acetyl acceptors.</text>
</comment>
<comment type="catalytic activity">
    <reaction evidence="2">
        <text>N(2)-acetyl-L-ornithine + L-glutamate = N-acetyl-L-glutamate + L-ornithine</text>
        <dbReference type="Rhea" id="RHEA:15349"/>
        <dbReference type="ChEBI" id="CHEBI:29985"/>
        <dbReference type="ChEBI" id="CHEBI:44337"/>
        <dbReference type="ChEBI" id="CHEBI:46911"/>
        <dbReference type="ChEBI" id="CHEBI:57805"/>
        <dbReference type="EC" id="2.3.1.35"/>
    </reaction>
</comment>
<comment type="biophysicochemical properties">
    <kinetics>
        <KM evidence="2">3.6 mM for L-N-acetylornithine (at 37 degrees Celsius and pH 8.0)</KM>
        <Vmax evidence="2">87.0 nmol/min/mg enzyme</Vmax>
    </kinetics>
    <phDependence>
        <text evidence="2">Optimum pH is between 7.5-8.</text>
    </phDependence>
</comment>
<comment type="pathway">
    <text>Antibiotic biosynthesis; clavulanate biosynthesis.</text>
</comment>
<comment type="subunit">
    <text evidence="2 3 4 5 6">Heterotetramer of two alpha and two beta chains.</text>
</comment>
<comment type="subcellular location">
    <subcellularLocation>
        <location evidence="1">Cytoplasm</location>
    </subcellularLocation>
</comment>
<comment type="mass spectrometry" mass="18816.2" method="Electrospray" evidence="2">
    <molecule>Glutamate N-acetyltransferase alpha chain</molecule>
</comment>
<comment type="mass spectrometry" mass="22811.7" method="Electrospray" evidence="2">
    <molecule>Glutamate N-acetyltransferase beta chain</molecule>
</comment>
<comment type="miscellaneous">
    <text evidence="8">The role of this protein is probably directed towards producing increased intracellular concentrations of arginine for clavam biosynthesis, rather than primary metabolism.</text>
</comment>
<comment type="similarity">
    <text evidence="7">Belongs to the ArgJ family.</text>
</comment>